<feature type="chain" id="PRO_0000411351" description="Aspartyl/glutamyl-tRNA(Asn/Gln) amidotransferase subunit B">
    <location>
        <begin position="1"/>
        <end position="479"/>
    </location>
</feature>
<accession>P0DB27</accession>
<accession>Q8K618</accession>
<name>GATB_STRPQ</name>
<keyword id="KW-0067">ATP-binding</keyword>
<keyword id="KW-0436">Ligase</keyword>
<keyword id="KW-0547">Nucleotide-binding</keyword>
<keyword id="KW-0648">Protein biosynthesis</keyword>
<dbReference type="EC" id="6.3.5.-" evidence="1"/>
<dbReference type="EMBL" id="BA000034">
    <property type="protein sequence ID" value="BAC63422.1"/>
    <property type="molecule type" value="Genomic_DNA"/>
</dbReference>
<dbReference type="RefSeq" id="WP_011054945.1">
    <property type="nucleotide sequence ID" value="NC_004606.1"/>
</dbReference>
<dbReference type="SMR" id="P0DB27"/>
<dbReference type="GeneID" id="69900386"/>
<dbReference type="KEGG" id="sps:SPs0327"/>
<dbReference type="HOGENOM" id="CLU_019240_0_0_9"/>
<dbReference type="GO" id="GO:0050566">
    <property type="term" value="F:asparaginyl-tRNA synthase (glutamine-hydrolyzing) activity"/>
    <property type="evidence" value="ECO:0007669"/>
    <property type="project" value="RHEA"/>
</dbReference>
<dbReference type="GO" id="GO:0005524">
    <property type="term" value="F:ATP binding"/>
    <property type="evidence" value="ECO:0007669"/>
    <property type="project" value="UniProtKB-KW"/>
</dbReference>
<dbReference type="GO" id="GO:0050567">
    <property type="term" value="F:glutaminyl-tRNA synthase (glutamine-hydrolyzing) activity"/>
    <property type="evidence" value="ECO:0007669"/>
    <property type="project" value="UniProtKB-UniRule"/>
</dbReference>
<dbReference type="GO" id="GO:0070681">
    <property type="term" value="P:glutaminyl-tRNAGln biosynthesis via transamidation"/>
    <property type="evidence" value="ECO:0007669"/>
    <property type="project" value="TreeGrafter"/>
</dbReference>
<dbReference type="GO" id="GO:0006412">
    <property type="term" value="P:translation"/>
    <property type="evidence" value="ECO:0007669"/>
    <property type="project" value="UniProtKB-UniRule"/>
</dbReference>
<dbReference type="FunFam" id="1.10.10.410:FF:000001">
    <property type="entry name" value="Aspartyl/glutamyl-tRNA(Asn/Gln) amidotransferase subunit B"/>
    <property type="match status" value="1"/>
</dbReference>
<dbReference type="FunFam" id="1.10.150.380:FF:000001">
    <property type="entry name" value="Aspartyl/glutamyl-tRNA(Asn/Gln) amidotransferase subunit B"/>
    <property type="match status" value="1"/>
</dbReference>
<dbReference type="Gene3D" id="1.10.10.410">
    <property type="match status" value="1"/>
</dbReference>
<dbReference type="Gene3D" id="1.10.150.380">
    <property type="entry name" value="GatB domain, N-terminal subdomain"/>
    <property type="match status" value="1"/>
</dbReference>
<dbReference type="HAMAP" id="MF_00121">
    <property type="entry name" value="GatB"/>
    <property type="match status" value="1"/>
</dbReference>
<dbReference type="InterPro" id="IPR017959">
    <property type="entry name" value="Asn/Gln-tRNA_amidoTrfase_suB/E"/>
</dbReference>
<dbReference type="InterPro" id="IPR006075">
    <property type="entry name" value="Asn/Gln-tRNA_Trfase_suB/E_cat"/>
</dbReference>
<dbReference type="InterPro" id="IPR018027">
    <property type="entry name" value="Asn/Gln_amidotransferase"/>
</dbReference>
<dbReference type="InterPro" id="IPR003789">
    <property type="entry name" value="Asn/Gln_tRNA_amidoTrase-B-like"/>
</dbReference>
<dbReference type="InterPro" id="IPR004413">
    <property type="entry name" value="GatB"/>
</dbReference>
<dbReference type="InterPro" id="IPR042114">
    <property type="entry name" value="GatB_C_1"/>
</dbReference>
<dbReference type="InterPro" id="IPR023168">
    <property type="entry name" value="GatB_Yqey_C_2"/>
</dbReference>
<dbReference type="InterPro" id="IPR017958">
    <property type="entry name" value="Gln-tRNA_amidoTrfase_suB_CS"/>
</dbReference>
<dbReference type="InterPro" id="IPR014746">
    <property type="entry name" value="Gln_synth/guanido_kin_cat_dom"/>
</dbReference>
<dbReference type="NCBIfam" id="TIGR00133">
    <property type="entry name" value="gatB"/>
    <property type="match status" value="1"/>
</dbReference>
<dbReference type="NCBIfam" id="NF004011">
    <property type="entry name" value="PRK05477.1-1"/>
    <property type="match status" value="1"/>
</dbReference>
<dbReference type="NCBIfam" id="NF004012">
    <property type="entry name" value="PRK05477.1-2"/>
    <property type="match status" value="1"/>
</dbReference>
<dbReference type="NCBIfam" id="NF004014">
    <property type="entry name" value="PRK05477.1-4"/>
    <property type="match status" value="1"/>
</dbReference>
<dbReference type="PANTHER" id="PTHR11659">
    <property type="entry name" value="GLUTAMYL-TRNA GLN AMIDOTRANSFERASE SUBUNIT B MITOCHONDRIAL AND PROKARYOTIC PET112-RELATED"/>
    <property type="match status" value="1"/>
</dbReference>
<dbReference type="PANTHER" id="PTHR11659:SF0">
    <property type="entry name" value="GLUTAMYL-TRNA(GLN) AMIDOTRANSFERASE SUBUNIT B, MITOCHONDRIAL"/>
    <property type="match status" value="1"/>
</dbReference>
<dbReference type="Pfam" id="PF02934">
    <property type="entry name" value="GatB_N"/>
    <property type="match status" value="1"/>
</dbReference>
<dbReference type="Pfam" id="PF02637">
    <property type="entry name" value="GatB_Yqey"/>
    <property type="match status" value="1"/>
</dbReference>
<dbReference type="SMART" id="SM00845">
    <property type="entry name" value="GatB_Yqey"/>
    <property type="match status" value="1"/>
</dbReference>
<dbReference type="SUPFAM" id="SSF89095">
    <property type="entry name" value="GatB/YqeY motif"/>
    <property type="match status" value="1"/>
</dbReference>
<dbReference type="SUPFAM" id="SSF55931">
    <property type="entry name" value="Glutamine synthetase/guanido kinase"/>
    <property type="match status" value="1"/>
</dbReference>
<dbReference type="PROSITE" id="PS01234">
    <property type="entry name" value="GATB"/>
    <property type="match status" value="1"/>
</dbReference>
<protein>
    <recommendedName>
        <fullName evidence="1">Aspartyl/glutamyl-tRNA(Asn/Gln) amidotransferase subunit B</fullName>
        <shortName evidence="1">Asp/Glu-ADT subunit B</shortName>
        <ecNumber evidence="1">6.3.5.-</ecNumber>
    </recommendedName>
</protein>
<evidence type="ECO:0000255" key="1">
    <source>
        <dbReference type="HAMAP-Rule" id="MF_00121"/>
    </source>
</evidence>
<reference key="1">
    <citation type="journal article" date="2003" name="Genome Res.">
        <title>Genome sequence of an M3 strain of Streptococcus pyogenes reveals a large-scale genomic rearrangement in invasive strains and new insights into phage evolution.</title>
        <authorList>
            <person name="Nakagawa I."/>
            <person name="Kurokawa K."/>
            <person name="Yamashita A."/>
            <person name="Nakata M."/>
            <person name="Tomiyasu Y."/>
            <person name="Okahashi N."/>
            <person name="Kawabata S."/>
            <person name="Yamazaki K."/>
            <person name="Shiba T."/>
            <person name="Yasunaga T."/>
            <person name="Hayashi H."/>
            <person name="Hattori M."/>
            <person name="Hamada S."/>
        </authorList>
    </citation>
    <scope>NUCLEOTIDE SEQUENCE [LARGE SCALE GENOMIC DNA]</scope>
    <source>
        <strain>SSI-1</strain>
    </source>
</reference>
<proteinExistence type="inferred from homology"/>
<sequence length="479" mass="53387">MNFETIIGLEVHVELNTNSKIFSPSSAHFGEDPNANTNVIDWSFPGVLPVMNKGVIDAGIKAALALNMDIHKEMHFDRKNYFYPDNPKAYQISQFDEPIGYNGWIEIKLEDGSTKKIRIERAHLEEDAGKNTHGTDGYSYVDLNRQGVPLIEIVSEADMRSPEEAYAYLTALKEIIQYTGISDVKMEEGSMRVDANISLRPYGQEQFGTKTELKNLNSFSNVRKGLEFEVERQAKLLRSGGAIRQETRRYDEANKGTILMRVKEGAADYRYFPEPDLPLYEIDDAWIDEMRAQLPQFPAQRRAKYEEELGLSAYDASQLTATKALSDFFETAVSLGGDAKQVSNWLQGEVAQFLNAEGKTIEEIALTPENLVEMIAIIADGTISSKMAKKVFVHLAKNGGSARAYVEKAGLVQISDPAVLVPIIHQVFADNEAAVADFKSGKRNADKAFTGFLMKATKGQANPQVAQQLLAQELQKLRD</sequence>
<gene>
    <name evidence="1" type="primary">gatB</name>
    <name type="ordered locus">SPs0327</name>
</gene>
<comment type="function">
    <text evidence="1">Allows the formation of correctly charged Asn-tRNA(Asn) or Gln-tRNA(Gln) through the transamidation of misacylated Asp-tRNA(Asn) or Glu-tRNA(Gln) in organisms which lack either or both of asparaginyl-tRNA or glutaminyl-tRNA synthetases. The reaction takes place in the presence of glutamine and ATP through an activated phospho-Asp-tRNA(Asn) or phospho-Glu-tRNA(Gln).</text>
</comment>
<comment type="catalytic activity">
    <reaction evidence="1">
        <text>L-glutamyl-tRNA(Gln) + L-glutamine + ATP + H2O = L-glutaminyl-tRNA(Gln) + L-glutamate + ADP + phosphate + H(+)</text>
        <dbReference type="Rhea" id="RHEA:17521"/>
        <dbReference type="Rhea" id="RHEA-COMP:9681"/>
        <dbReference type="Rhea" id="RHEA-COMP:9684"/>
        <dbReference type="ChEBI" id="CHEBI:15377"/>
        <dbReference type="ChEBI" id="CHEBI:15378"/>
        <dbReference type="ChEBI" id="CHEBI:29985"/>
        <dbReference type="ChEBI" id="CHEBI:30616"/>
        <dbReference type="ChEBI" id="CHEBI:43474"/>
        <dbReference type="ChEBI" id="CHEBI:58359"/>
        <dbReference type="ChEBI" id="CHEBI:78520"/>
        <dbReference type="ChEBI" id="CHEBI:78521"/>
        <dbReference type="ChEBI" id="CHEBI:456216"/>
    </reaction>
</comment>
<comment type="catalytic activity">
    <reaction evidence="1">
        <text>L-aspartyl-tRNA(Asn) + L-glutamine + ATP + H2O = L-asparaginyl-tRNA(Asn) + L-glutamate + ADP + phosphate + 2 H(+)</text>
        <dbReference type="Rhea" id="RHEA:14513"/>
        <dbReference type="Rhea" id="RHEA-COMP:9674"/>
        <dbReference type="Rhea" id="RHEA-COMP:9677"/>
        <dbReference type="ChEBI" id="CHEBI:15377"/>
        <dbReference type="ChEBI" id="CHEBI:15378"/>
        <dbReference type="ChEBI" id="CHEBI:29985"/>
        <dbReference type="ChEBI" id="CHEBI:30616"/>
        <dbReference type="ChEBI" id="CHEBI:43474"/>
        <dbReference type="ChEBI" id="CHEBI:58359"/>
        <dbReference type="ChEBI" id="CHEBI:78515"/>
        <dbReference type="ChEBI" id="CHEBI:78516"/>
        <dbReference type="ChEBI" id="CHEBI:456216"/>
    </reaction>
</comment>
<comment type="subunit">
    <text evidence="1">Heterotrimer of A, B and C subunits.</text>
</comment>
<comment type="similarity">
    <text evidence="1">Belongs to the GatB/GatE family. GatB subfamily.</text>
</comment>
<organism>
    <name type="scientific">Streptococcus pyogenes serotype M3 (strain SSI-1)</name>
    <dbReference type="NCBI Taxonomy" id="193567"/>
    <lineage>
        <taxon>Bacteria</taxon>
        <taxon>Bacillati</taxon>
        <taxon>Bacillota</taxon>
        <taxon>Bacilli</taxon>
        <taxon>Lactobacillales</taxon>
        <taxon>Streptococcaceae</taxon>
        <taxon>Streptococcus</taxon>
    </lineage>
</organism>